<reference key="1">
    <citation type="journal article" date="2005" name="J. Bacteriol.">
        <title>Whole-genome sequencing of Staphylococcus haemolyticus uncovers the extreme plasticity of its genome and the evolution of human-colonizing staphylococcal species.</title>
        <authorList>
            <person name="Takeuchi F."/>
            <person name="Watanabe S."/>
            <person name="Baba T."/>
            <person name="Yuzawa H."/>
            <person name="Ito T."/>
            <person name="Morimoto Y."/>
            <person name="Kuroda M."/>
            <person name="Cui L."/>
            <person name="Takahashi M."/>
            <person name="Ankai A."/>
            <person name="Baba S."/>
            <person name="Fukui S."/>
            <person name="Lee J.C."/>
            <person name="Hiramatsu K."/>
        </authorList>
    </citation>
    <scope>NUCLEOTIDE SEQUENCE [LARGE SCALE GENOMIC DNA]</scope>
    <source>
        <strain>JCSC1435</strain>
    </source>
</reference>
<evidence type="ECO:0000250" key="1"/>
<evidence type="ECO:0000255" key="2">
    <source>
        <dbReference type="PROSITE-ProRule" id="PRU00180"/>
    </source>
</evidence>
<evidence type="ECO:0000305" key="3"/>
<name>RS1_STAHJ</name>
<keyword id="KW-0677">Repeat</keyword>
<keyword id="KW-0687">Ribonucleoprotein</keyword>
<keyword id="KW-0689">Ribosomal protein</keyword>
<keyword id="KW-0694">RNA-binding</keyword>
<feature type="chain" id="PRO_0000196054" description="Small ribosomal subunit protein bS1">
    <location>
        <begin position="1"/>
        <end position="392"/>
    </location>
</feature>
<feature type="domain" description="S1 motif 1" evidence="2">
    <location>
        <begin position="16"/>
        <end position="90"/>
    </location>
</feature>
<feature type="domain" description="S1 motif 2" evidence="2">
    <location>
        <begin position="108"/>
        <end position="173"/>
    </location>
</feature>
<feature type="domain" description="S1 motif 3" evidence="2">
    <location>
        <begin position="194"/>
        <end position="262"/>
    </location>
</feature>
<feature type="domain" description="S1 motif 4" evidence="2">
    <location>
        <begin position="279"/>
        <end position="348"/>
    </location>
</feature>
<comment type="function">
    <text evidence="1">Binds mRNA; thus facilitating recognition of the initiation point. It is needed to translate mRNA with a short Shine-Dalgarno (SD) purine-rich sequence (By similarity).</text>
</comment>
<comment type="similarity">
    <text evidence="3">Belongs to the bacterial ribosomal protein bS1 family.</text>
</comment>
<dbReference type="EMBL" id="AP006716">
    <property type="protein sequence ID" value="BAE04744.1"/>
    <property type="molecule type" value="Genomic_DNA"/>
</dbReference>
<dbReference type="RefSeq" id="WP_011275730.1">
    <property type="nucleotide sequence ID" value="NC_007168.1"/>
</dbReference>
<dbReference type="SMR" id="Q4L6I1"/>
<dbReference type="GeneID" id="93780832"/>
<dbReference type="KEGG" id="sha:SH1435"/>
<dbReference type="eggNOG" id="COG0539">
    <property type="taxonomic scope" value="Bacteria"/>
</dbReference>
<dbReference type="HOGENOM" id="CLU_015805_4_5_9"/>
<dbReference type="OrthoDB" id="9804077at2"/>
<dbReference type="Proteomes" id="UP000000543">
    <property type="component" value="Chromosome"/>
</dbReference>
<dbReference type="GO" id="GO:0022627">
    <property type="term" value="C:cytosolic small ribosomal subunit"/>
    <property type="evidence" value="ECO:0007669"/>
    <property type="project" value="TreeGrafter"/>
</dbReference>
<dbReference type="GO" id="GO:0003729">
    <property type="term" value="F:mRNA binding"/>
    <property type="evidence" value="ECO:0007669"/>
    <property type="project" value="TreeGrafter"/>
</dbReference>
<dbReference type="GO" id="GO:0003735">
    <property type="term" value="F:structural constituent of ribosome"/>
    <property type="evidence" value="ECO:0007669"/>
    <property type="project" value="TreeGrafter"/>
</dbReference>
<dbReference type="GO" id="GO:0006412">
    <property type="term" value="P:translation"/>
    <property type="evidence" value="ECO:0007669"/>
    <property type="project" value="TreeGrafter"/>
</dbReference>
<dbReference type="CDD" id="cd05687">
    <property type="entry name" value="S1_RPS1_repeat_ec1_hs1"/>
    <property type="match status" value="1"/>
</dbReference>
<dbReference type="CDD" id="cd04465">
    <property type="entry name" value="S1_RPS1_repeat_ec2_hs2"/>
    <property type="match status" value="1"/>
</dbReference>
<dbReference type="CDD" id="cd05688">
    <property type="entry name" value="S1_RPS1_repeat_ec3"/>
    <property type="match status" value="1"/>
</dbReference>
<dbReference type="FunFam" id="2.40.50.140:FF:000114">
    <property type="entry name" value="30S ribosomal protein S1"/>
    <property type="match status" value="1"/>
</dbReference>
<dbReference type="FunFam" id="2.40.50.140:FF:000166">
    <property type="entry name" value="30S ribosomal protein S1"/>
    <property type="match status" value="1"/>
</dbReference>
<dbReference type="FunFam" id="2.40.50.140:FF:000051">
    <property type="entry name" value="RNA-binding transcriptional accessory protein"/>
    <property type="match status" value="1"/>
</dbReference>
<dbReference type="Gene3D" id="2.40.50.140">
    <property type="entry name" value="Nucleic acid-binding proteins"/>
    <property type="match status" value="4"/>
</dbReference>
<dbReference type="InterPro" id="IPR012340">
    <property type="entry name" value="NA-bd_OB-fold"/>
</dbReference>
<dbReference type="InterPro" id="IPR050437">
    <property type="entry name" value="Ribos_protein_bS1-like"/>
</dbReference>
<dbReference type="InterPro" id="IPR035104">
    <property type="entry name" value="Ribosomal_protein_S1-like"/>
</dbReference>
<dbReference type="InterPro" id="IPR003029">
    <property type="entry name" value="S1_domain"/>
</dbReference>
<dbReference type="NCBIfam" id="NF005208">
    <property type="entry name" value="PRK06676.1"/>
    <property type="match status" value="1"/>
</dbReference>
<dbReference type="PANTHER" id="PTHR10724">
    <property type="entry name" value="30S RIBOSOMAL PROTEIN S1"/>
    <property type="match status" value="1"/>
</dbReference>
<dbReference type="PANTHER" id="PTHR10724:SF7">
    <property type="entry name" value="SMALL RIBOSOMAL SUBUNIT PROTEIN BS1C"/>
    <property type="match status" value="1"/>
</dbReference>
<dbReference type="Pfam" id="PF00575">
    <property type="entry name" value="S1"/>
    <property type="match status" value="4"/>
</dbReference>
<dbReference type="PRINTS" id="PR00681">
    <property type="entry name" value="RIBOSOMALS1"/>
</dbReference>
<dbReference type="SMART" id="SM00316">
    <property type="entry name" value="S1"/>
    <property type="match status" value="4"/>
</dbReference>
<dbReference type="SUPFAM" id="SSF50249">
    <property type="entry name" value="Nucleic acid-binding proteins"/>
    <property type="match status" value="4"/>
</dbReference>
<dbReference type="PROSITE" id="PS50126">
    <property type="entry name" value="S1"/>
    <property type="match status" value="4"/>
</dbReference>
<organism>
    <name type="scientific">Staphylococcus haemolyticus (strain JCSC1435)</name>
    <dbReference type="NCBI Taxonomy" id="279808"/>
    <lineage>
        <taxon>Bacteria</taxon>
        <taxon>Bacillati</taxon>
        <taxon>Bacillota</taxon>
        <taxon>Bacilli</taxon>
        <taxon>Bacillales</taxon>
        <taxon>Staphylococcaceae</taxon>
        <taxon>Staphylococcus</taxon>
    </lineage>
</organism>
<protein>
    <recommendedName>
        <fullName evidence="3">Small ribosomal subunit protein bS1</fullName>
    </recommendedName>
    <alternativeName>
        <fullName>30S ribosomal protein S1</fullName>
    </alternativeName>
</protein>
<proteinExistence type="inferred from homology"/>
<sequence>MTEEFNESMINDIKEGDKVTGEVQQVEDKQVVVHINGGKFNGIIPISQLSTHHIENPSEVVKQGDEIEAYVTKIEVDEENDSGVYILSKRQLETEKSYEYLQEKLDNDEIIEAKVTEVVKGGLVVDVGQRGFVPASLISTDFIEDFSVFDGQTIRIKVEELDPENNRVILSRKAVEQAENDVKKASLLESLNAGDVIKGKVARLTNFGAFVDIGGVDGLVHVSELSHEHVDSPEDVVSVGQEVDVKVKSVEKDAERISLSIKDTLPTPFESIKGQFHEDDVIEGKVVRLANFGAFVEIAPGVQGLVHISEIAHEHIGTPGEKLEPGQQVNVKILGIDEENERISLSIKATLPKEDVVESDDATTQSYLSNDSIEDNPTLGDVFGDKFKDLKF</sequence>
<accession>Q4L6I1</accession>
<gene>
    <name type="primary">rpsA</name>
    <name type="ordered locus">SH1435</name>
</gene>